<comment type="function">
    <text evidence="1 3">Master regulator of synaptic plasticity that self-assembles into virion-like capsids that encapsulate RNAs and mediate intercellular RNA transfer in the nervous system. ARC protein is released from neurons in extracellular vesicles that mediate the transfer of ARC mRNA into new target cells, where ARC mRNA can undergo activity-dependent translation. ARC capsids are endocytosed and are able to transfer ARC mRNA into the cytoplasm of neurons. Acts as a key regulator of synaptic plasticity: required for protein synthesis-dependent forms of long-term potentiation (LTP) and depression (LTD) and for the formation of long-term memory. Regulates synaptic plasticity by promoting endocytosis of AMPA receptors (AMPARs) in response to synaptic activity: this endocytic pathway maintains levels of surface AMPARs in response to chronic changes in neuronal activity through synaptic scaling, thereby contributing to neuronal homeostasis. Acts as a postsynaptic mediator of activity-dependent synapse elimination in the developing cerebellum by mediating elimination of surplus climbing fiber synapses. Accumulates at weaker synapses, probably to prevent their undesired enhancement. This suggests that ARC-containing virion-like capsids may be required to eliminate synaptic material.</text>
</comment>
<comment type="subunit">
    <text evidence="1 3">Homooligomer; homooligomerizes into virion-like capsids.</text>
</comment>
<comment type="subcellular location">
    <subcellularLocation>
        <location evidence="1">Extracellular vesicle membrane</location>
        <topology evidence="3">Lipid-anchor</topology>
    </subcellularLocation>
    <subcellularLocation>
        <location evidence="3">Postsynaptic cell membrane</location>
        <topology evidence="3">Lipid-anchor</topology>
    </subcellularLocation>
    <subcellularLocation>
        <location evidence="1">Synapse</location>
    </subcellularLocation>
    <subcellularLocation>
        <location evidence="1">Postsynaptic density</location>
    </subcellularLocation>
    <subcellularLocation>
        <location evidence="1">Early endosome membrane</location>
    </subcellularLocation>
    <subcellularLocation>
        <location evidence="1">Cell projection</location>
        <location evidence="1">Dendrite</location>
    </subcellularLocation>
    <subcellularLocation>
        <location evidence="1">Cytoplasm</location>
        <location evidence="1">Cytoskeleton</location>
    </subcellularLocation>
    <subcellularLocation>
        <location evidence="1">Cytoplasm</location>
        <location evidence="1">Cell cortex</location>
    </subcellularLocation>
    <subcellularLocation>
        <location evidence="1">Cell projection</location>
        <location evidence="1">Dendritic spine</location>
    </subcellularLocation>
    <text evidence="1 3">Forms virion-like extracellular vesicles that are released from neurons. Enriched in postsynaptic density of dendritic spines. Accumulates at weaker synapses may be required to prevent their undesired enhancement. Associated with the cell cortex of neuronal soma and dendrites.</text>
</comment>
<comment type="tissue specificity">
    <text evidence="6">Expressed at various levels throughout the brain.</text>
</comment>
<comment type="induction">
    <text evidence="6">By synaptic activity. Transcript level significantly increased in auditory cortex as well as two higher-associative brain regions by auditory imprinting stimulus in newborn chicks.</text>
</comment>
<comment type="domain">
    <text evidence="1">The protein is evolutionarily related to retrotransposon Gag proteins: it contains large N- and C-terminal domains that form a bi-lobar architecture similar to the capsid domain of human immunodeficiency virus (HIV) gag protein. It contains structural elements found within viral Gag polyproteins originated from the Ty3/gypsy retrotransposon family and retains the ability to form virion-like capsid structures that can mediate mRNA transfer between cells. Tetrapod and fly Arc protein-coding genes originated independently from distinct lineages of Ty3/gypsy retrotransposons.</text>
</comment>
<comment type="PTM">
    <text evidence="3">Palmitoylation anchors the protein into the membrane by allowing direct insertion into the hydrophobic core of the lipid bilayer.</text>
</comment>
<comment type="similarity">
    <text evidence="8">Belongs to the ARC/ARG3.1 family.</text>
</comment>
<protein>
    <recommendedName>
        <fullName evidence="8">Activity-regulated cytoskeleton-associated protein</fullName>
    </recommendedName>
    <alternativeName>
        <fullName evidence="7">Activity-regulated gene 3.1 protein homolog</fullName>
        <shortName evidence="7">ARC/ARG3.1</shortName>
        <shortName evidence="7">Arg3.1</shortName>
    </alternativeName>
</protein>
<accession>Q8AWC3</accession>
<evidence type="ECO:0000250" key="1">
    <source>
        <dbReference type="UniProtKB" id="Q63053"/>
    </source>
</evidence>
<evidence type="ECO:0000250" key="2">
    <source>
        <dbReference type="UniProtKB" id="Q7LC44"/>
    </source>
</evidence>
<evidence type="ECO:0000250" key="3">
    <source>
        <dbReference type="UniProtKB" id="Q9WV31"/>
    </source>
</evidence>
<evidence type="ECO:0000255" key="4"/>
<evidence type="ECO:0000256" key="5">
    <source>
        <dbReference type="SAM" id="MobiDB-lite"/>
    </source>
</evidence>
<evidence type="ECO:0000269" key="6">
    <source>
    </source>
</evidence>
<evidence type="ECO:0000303" key="7">
    <source>
    </source>
</evidence>
<evidence type="ECO:0000305" key="8"/>
<evidence type="ECO:0000312" key="9">
    <source>
        <dbReference type="EMBL" id="CAC81239.1"/>
    </source>
</evidence>
<proteinExistence type="evidence at transcript level"/>
<keyword id="KW-1003">Cell membrane</keyword>
<keyword id="KW-0966">Cell projection</keyword>
<keyword id="KW-0175">Coiled coil</keyword>
<keyword id="KW-0963">Cytoplasm</keyword>
<keyword id="KW-0206">Cytoskeleton</keyword>
<keyword id="KW-0217">Developmental protein</keyword>
<keyword id="KW-0254">Endocytosis</keyword>
<keyword id="KW-0967">Endosome</keyword>
<keyword id="KW-0449">Lipoprotein</keyword>
<keyword id="KW-0472">Membrane</keyword>
<keyword id="KW-0564">Palmitate</keyword>
<keyword id="KW-0628">Postsynaptic cell membrane</keyword>
<keyword id="KW-1185">Reference proteome</keyword>
<keyword id="KW-0694">RNA-binding</keyword>
<keyword id="KW-0770">Synapse</keyword>
<keyword id="KW-0813">Transport</keyword>
<name>ARC_CHICK</name>
<gene>
    <name evidence="2" type="primary">ARC</name>
</gene>
<sequence>MQLDNVTNAGIHSFQGHRGVANKPNVILQIGKCRAEMLEHVRRTHRHLLSEVSKQVERELKGLQKSVGKLENNLEDHVPTDNQRWKKSIKACLARCQETIAHLERWVKREMNVWKEVFFRLEKWADRLESMGGKYCPGEHGKQTVSVGVGGPEIRPSEGEIYDYALDMSQMYALTPAPGEVPSIPQAHDSYQWVSVSEDAPASPVETQIFEDPHEFLSHLEEYLKQVGGTEEYWLSQIQNHMNGPAKKWWEYKQDSVKNWVEFKKEFLQYSEGTLTRDAIKRELDLPQKEGEPLDQFLWRKRDLYQTLYVDADEEEIIQYVVGTLQPKLKRFLSYPLPKTLEQLIQRGKEVQGNMDHSEEPSPQRTPEIQSGDSVESMPPSTTASPVPSNGTQPEPPSPPATVI</sequence>
<feature type="chain" id="PRO_0000273288" description="Activity-regulated cytoskeleton-associated protein">
    <location>
        <begin position="1"/>
        <end position="404"/>
    </location>
</feature>
<feature type="region of interest" description="Disordered" evidence="5">
    <location>
        <begin position="351"/>
        <end position="404"/>
    </location>
</feature>
<feature type="coiled-coil region" evidence="4">
    <location>
        <begin position="51"/>
        <end position="78"/>
    </location>
</feature>
<feature type="compositionally biased region" description="Polar residues" evidence="5">
    <location>
        <begin position="363"/>
        <end position="393"/>
    </location>
</feature>
<feature type="compositionally biased region" description="Pro residues" evidence="5">
    <location>
        <begin position="394"/>
        <end position="404"/>
    </location>
</feature>
<reference evidence="8 9" key="1">
    <citation type="journal article" date="2005" name="Neuroscience">
        <title>Early socio-emotional experience induces expression of the immediate-early gene Arc/arg3.1 (activity-regulated cytoskeleton-associated protein/activity-regulated gene) in learning-relevant brain regions of the newborn chick.</title>
        <authorList>
            <person name="Bock J."/>
            <person name="Thode C."/>
            <person name="Hannemann O."/>
            <person name="Braun K."/>
            <person name="Darlison M.G."/>
        </authorList>
    </citation>
    <scope>NUCLEOTIDE SEQUENCE [MRNA]</scope>
    <scope>TISSUE SPECIFICITY</scope>
    <scope>INDUCTION</scope>
    <source>
        <tissue evidence="9">Brain</tissue>
    </source>
</reference>
<dbReference type="EMBL" id="AJ272062">
    <property type="protein sequence ID" value="CAC81239.1"/>
    <property type="molecule type" value="mRNA"/>
</dbReference>
<dbReference type="RefSeq" id="NP_989763.1">
    <property type="nucleotide sequence ID" value="NM_204432.1"/>
</dbReference>
<dbReference type="RefSeq" id="XP_015138650.1">
    <property type="nucleotide sequence ID" value="XM_015283164.4"/>
</dbReference>
<dbReference type="RefSeq" id="XP_046766187.1">
    <property type="nucleotide sequence ID" value="XM_046910231.1"/>
</dbReference>
<dbReference type="SMR" id="Q8AWC3"/>
<dbReference type="FunCoup" id="Q8AWC3">
    <property type="interactions" value="224"/>
</dbReference>
<dbReference type="STRING" id="9031.ENSGALP00000025980"/>
<dbReference type="PaxDb" id="9031-ENSGALP00000025980"/>
<dbReference type="Ensembl" id="ENSGALT00010018954.1">
    <property type="protein sequence ID" value="ENSGALP00010010503.1"/>
    <property type="gene ID" value="ENSGALG00010007950.1"/>
</dbReference>
<dbReference type="GeneID" id="395075"/>
<dbReference type="KEGG" id="gga:395075"/>
<dbReference type="CTD" id="23237"/>
<dbReference type="VEuPathDB" id="HostDB:geneid_395075"/>
<dbReference type="eggNOG" id="ENOG502QSPT">
    <property type="taxonomic scope" value="Eukaryota"/>
</dbReference>
<dbReference type="GeneTree" id="ENSGT00390000003914"/>
<dbReference type="HOGENOM" id="CLU_782004_0_0_1"/>
<dbReference type="InParanoid" id="Q8AWC3"/>
<dbReference type="OMA" id="NWLEFKK"/>
<dbReference type="OrthoDB" id="9867597at2759"/>
<dbReference type="PhylomeDB" id="Q8AWC3"/>
<dbReference type="TreeFam" id="TF335604"/>
<dbReference type="PRO" id="PR:Q8AWC3"/>
<dbReference type="Proteomes" id="UP000000539">
    <property type="component" value="Chromosome 2"/>
</dbReference>
<dbReference type="Bgee" id="ENSGALG00000016154">
    <property type="expression patterns" value="Expressed in brain and 3 other cell types or tissues"/>
</dbReference>
<dbReference type="GO" id="GO:0015629">
    <property type="term" value="C:actin cytoskeleton"/>
    <property type="evidence" value="ECO:0000318"/>
    <property type="project" value="GO_Central"/>
</dbReference>
<dbReference type="GO" id="GO:0005938">
    <property type="term" value="C:cell cortex"/>
    <property type="evidence" value="ECO:0007669"/>
    <property type="project" value="UniProtKB-SubCell"/>
</dbReference>
<dbReference type="GO" id="GO:0005737">
    <property type="term" value="C:cytoplasm"/>
    <property type="evidence" value="ECO:0000318"/>
    <property type="project" value="GO_Central"/>
</dbReference>
<dbReference type="GO" id="GO:0043197">
    <property type="term" value="C:dendritic spine"/>
    <property type="evidence" value="ECO:0000250"/>
    <property type="project" value="UniProtKB"/>
</dbReference>
<dbReference type="GO" id="GO:0031901">
    <property type="term" value="C:early endosome membrane"/>
    <property type="evidence" value="ECO:0007669"/>
    <property type="project" value="UniProtKB-SubCell"/>
</dbReference>
<dbReference type="GO" id="GO:1903561">
    <property type="term" value="C:extracellular vesicle"/>
    <property type="evidence" value="ECO:0000250"/>
    <property type="project" value="UniProtKB"/>
</dbReference>
<dbReference type="GO" id="GO:0045121">
    <property type="term" value="C:membrane raft"/>
    <property type="evidence" value="ECO:0000250"/>
    <property type="project" value="UniProtKB"/>
</dbReference>
<dbReference type="GO" id="GO:0005886">
    <property type="term" value="C:plasma membrane"/>
    <property type="evidence" value="ECO:0000318"/>
    <property type="project" value="GO_Central"/>
</dbReference>
<dbReference type="GO" id="GO:0014069">
    <property type="term" value="C:postsynaptic density"/>
    <property type="evidence" value="ECO:0007669"/>
    <property type="project" value="UniProtKB-SubCell"/>
</dbReference>
<dbReference type="GO" id="GO:0045211">
    <property type="term" value="C:postsynaptic membrane"/>
    <property type="evidence" value="ECO:0007669"/>
    <property type="project" value="UniProtKB-SubCell"/>
</dbReference>
<dbReference type="GO" id="GO:0170047">
    <property type="term" value="C:virus-like capsid"/>
    <property type="evidence" value="ECO:0007669"/>
    <property type="project" value="Ensembl"/>
</dbReference>
<dbReference type="GO" id="GO:0003729">
    <property type="term" value="F:mRNA binding"/>
    <property type="evidence" value="ECO:0000250"/>
    <property type="project" value="UniProtKB"/>
</dbReference>
<dbReference type="GO" id="GO:0005198">
    <property type="term" value="F:structural molecule activity"/>
    <property type="evidence" value="ECO:0007669"/>
    <property type="project" value="Ensembl"/>
</dbReference>
<dbReference type="GO" id="GO:0016477">
    <property type="term" value="P:cell migration"/>
    <property type="evidence" value="ECO:0000250"/>
    <property type="project" value="UniProtKB"/>
</dbReference>
<dbReference type="GO" id="GO:0007010">
    <property type="term" value="P:cytoskeleton organization"/>
    <property type="evidence" value="ECO:0000250"/>
    <property type="project" value="UniProtKB"/>
</dbReference>
<dbReference type="GO" id="GO:0006897">
    <property type="term" value="P:endocytosis"/>
    <property type="evidence" value="ECO:0007669"/>
    <property type="project" value="UniProtKB-KW"/>
</dbReference>
<dbReference type="GO" id="GO:0007616">
    <property type="term" value="P:long-term memory"/>
    <property type="evidence" value="ECO:0000250"/>
    <property type="project" value="UniProtKB"/>
</dbReference>
<dbReference type="GO" id="GO:0050804">
    <property type="term" value="P:modulation of chemical synaptic transmission"/>
    <property type="evidence" value="ECO:0000250"/>
    <property type="project" value="UniProtKB"/>
</dbReference>
<dbReference type="GO" id="GO:0051028">
    <property type="term" value="P:mRNA transport"/>
    <property type="evidence" value="ECO:0000250"/>
    <property type="project" value="UniProtKB"/>
</dbReference>
<dbReference type="GO" id="GO:0051260">
    <property type="term" value="P:protein homooligomerization"/>
    <property type="evidence" value="ECO:0000250"/>
    <property type="project" value="UniProtKB"/>
</dbReference>
<dbReference type="GO" id="GO:0022604">
    <property type="term" value="P:regulation of cell morphogenesis"/>
    <property type="evidence" value="ECO:0000250"/>
    <property type="project" value="UniProtKB"/>
</dbReference>
<dbReference type="GO" id="GO:1900452">
    <property type="term" value="P:regulation of long-term synaptic depression"/>
    <property type="evidence" value="ECO:0000250"/>
    <property type="project" value="UniProtKB"/>
</dbReference>
<dbReference type="GO" id="GO:1900271">
    <property type="term" value="P:regulation of long-term synaptic potentiation"/>
    <property type="evidence" value="ECO:0000250"/>
    <property type="project" value="UniProtKB"/>
</dbReference>
<dbReference type="GO" id="GO:0048168">
    <property type="term" value="P:regulation of neuronal synaptic plasticity"/>
    <property type="evidence" value="ECO:0000318"/>
    <property type="project" value="GO_Central"/>
</dbReference>
<dbReference type="GO" id="GO:0110077">
    <property type="term" value="P:vesicle-mediated intercellular transport"/>
    <property type="evidence" value="ECO:0000250"/>
    <property type="project" value="UniProtKB"/>
</dbReference>
<dbReference type="InterPro" id="IPR023263">
    <property type="entry name" value="Arc"/>
</dbReference>
<dbReference type="InterPro" id="IPR040814">
    <property type="entry name" value="Arc_C"/>
</dbReference>
<dbReference type="InterPro" id="IPR048965">
    <property type="entry name" value="Arc_capsid_dom"/>
</dbReference>
<dbReference type="InterPro" id="IPR045557">
    <property type="entry name" value="Arc_N"/>
</dbReference>
<dbReference type="PANTHER" id="PTHR15962">
    <property type="entry name" value="ACTIVITY-REGULATED CYTOSKELETON-ASSOCIATED PROTEIN"/>
    <property type="match status" value="1"/>
</dbReference>
<dbReference type="PANTHER" id="PTHR15962:SF0">
    <property type="entry name" value="ACTIVITY-REGULATED CYTOSKELETON-ASSOCIATED PROTEIN"/>
    <property type="match status" value="1"/>
</dbReference>
<dbReference type="Pfam" id="PF18162">
    <property type="entry name" value="Arc_C"/>
    <property type="match status" value="1"/>
</dbReference>
<dbReference type="Pfam" id="PF21395">
    <property type="entry name" value="Arc_capsid_dom"/>
    <property type="match status" value="1"/>
</dbReference>
<dbReference type="Pfam" id="PF19284">
    <property type="entry name" value="Arc_MA"/>
    <property type="match status" value="1"/>
</dbReference>
<dbReference type="PRINTS" id="PR02027">
    <property type="entry name" value="ARCARG31"/>
</dbReference>
<organism>
    <name type="scientific">Gallus gallus</name>
    <name type="common">Chicken</name>
    <dbReference type="NCBI Taxonomy" id="9031"/>
    <lineage>
        <taxon>Eukaryota</taxon>
        <taxon>Metazoa</taxon>
        <taxon>Chordata</taxon>
        <taxon>Craniata</taxon>
        <taxon>Vertebrata</taxon>
        <taxon>Euteleostomi</taxon>
        <taxon>Archelosauria</taxon>
        <taxon>Archosauria</taxon>
        <taxon>Dinosauria</taxon>
        <taxon>Saurischia</taxon>
        <taxon>Theropoda</taxon>
        <taxon>Coelurosauria</taxon>
        <taxon>Aves</taxon>
        <taxon>Neognathae</taxon>
        <taxon>Galloanserae</taxon>
        <taxon>Galliformes</taxon>
        <taxon>Phasianidae</taxon>
        <taxon>Phasianinae</taxon>
        <taxon>Gallus</taxon>
    </lineage>
</organism>